<sequence length="318" mass="33561">MIDPTLRGAYRPGQLTVHHDPAVLGSVAKALRGVGRTVALVPTMGALHQGHLQIVRQAKRTNQVVIVSIFVNPLQFGAGEDLDKYPRTLDADVELLRAEGVELVFAPNAEQMYPDGPRTTVHPGPLGAELEGASRPTHFAGMLTVVAKLLQIARPHQAFFGEKDYQQLTLIRQMVRDLNFDVRIVAVPTVRESDGLALSSRNRYLDAAQRETALALSAALSAGAHAGGLGAEGVLAAARAVLDATPGLDLDYLELRSSTLGPAPASGNARLLVAAKVGTTRLIDNIAVTLGAPIDGHPNLDSQPEPAGTDPALLPPAR</sequence>
<dbReference type="EC" id="6.3.2.1" evidence="1"/>
<dbReference type="EMBL" id="AP006618">
    <property type="protein sequence ID" value="BAD55248.1"/>
    <property type="molecule type" value="Genomic_DNA"/>
</dbReference>
<dbReference type="RefSeq" id="WP_011206935.1">
    <property type="nucleotide sequence ID" value="NC_006361.1"/>
</dbReference>
<dbReference type="SMR" id="Q5Z2U3"/>
<dbReference type="STRING" id="247156.NFA_4060"/>
<dbReference type="GeneID" id="61131244"/>
<dbReference type="KEGG" id="nfa:NFA_4060"/>
<dbReference type="eggNOG" id="COG0414">
    <property type="taxonomic scope" value="Bacteria"/>
</dbReference>
<dbReference type="HOGENOM" id="CLU_047148_0_2_11"/>
<dbReference type="OrthoDB" id="9773087at2"/>
<dbReference type="UniPathway" id="UPA00028">
    <property type="reaction ID" value="UER00005"/>
</dbReference>
<dbReference type="Proteomes" id="UP000006820">
    <property type="component" value="Chromosome"/>
</dbReference>
<dbReference type="GO" id="GO:0005829">
    <property type="term" value="C:cytosol"/>
    <property type="evidence" value="ECO:0007669"/>
    <property type="project" value="TreeGrafter"/>
</dbReference>
<dbReference type="GO" id="GO:0005524">
    <property type="term" value="F:ATP binding"/>
    <property type="evidence" value="ECO:0007669"/>
    <property type="project" value="UniProtKB-KW"/>
</dbReference>
<dbReference type="GO" id="GO:0004592">
    <property type="term" value="F:pantoate-beta-alanine ligase activity"/>
    <property type="evidence" value="ECO:0007669"/>
    <property type="project" value="UniProtKB-UniRule"/>
</dbReference>
<dbReference type="GO" id="GO:0015940">
    <property type="term" value="P:pantothenate biosynthetic process"/>
    <property type="evidence" value="ECO:0007669"/>
    <property type="project" value="UniProtKB-UniRule"/>
</dbReference>
<dbReference type="CDD" id="cd00560">
    <property type="entry name" value="PanC"/>
    <property type="match status" value="1"/>
</dbReference>
<dbReference type="FunFam" id="3.40.50.620:FF:000114">
    <property type="entry name" value="Pantothenate synthetase"/>
    <property type="match status" value="1"/>
</dbReference>
<dbReference type="Gene3D" id="3.40.50.620">
    <property type="entry name" value="HUPs"/>
    <property type="match status" value="1"/>
</dbReference>
<dbReference type="Gene3D" id="3.30.1300.10">
    <property type="entry name" value="Pantoate-beta-alanine ligase, C-terminal domain"/>
    <property type="match status" value="1"/>
</dbReference>
<dbReference type="HAMAP" id="MF_00158">
    <property type="entry name" value="PanC"/>
    <property type="match status" value="1"/>
</dbReference>
<dbReference type="InterPro" id="IPR004821">
    <property type="entry name" value="Cyt_trans-like"/>
</dbReference>
<dbReference type="InterPro" id="IPR003721">
    <property type="entry name" value="Pantoate_ligase"/>
</dbReference>
<dbReference type="InterPro" id="IPR042176">
    <property type="entry name" value="Pantoate_ligase_C"/>
</dbReference>
<dbReference type="InterPro" id="IPR014729">
    <property type="entry name" value="Rossmann-like_a/b/a_fold"/>
</dbReference>
<dbReference type="NCBIfam" id="TIGR00125">
    <property type="entry name" value="cyt_tran_rel"/>
    <property type="match status" value="1"/>
</dbReference>
<dbReference type="NCBIfam" id="TIGR00018">
    <property type="entry name" value="panC"/>
    <property type="match status" value="1"/>
</dbReference>
<dbReference type="PANTHER" id="PTHR21299">
    <property type="entry name" value="CYTIDYLATE KINASE/PANTOATE-BETA-ALANINE LIGASE"/>
    <property type="match status" value="1"/>
</dbReference>
<dbReference type="PANTHER" id="PTHR21299:SF1">
    <property type="entry name" value="PANTOATE--BETA-ALANINE LIGASE"/>
    <property type="match status" value="1"/>
</dbReference>
<dbReference type="Pfam" id="PF02569">
    <property type="entry name" value="Pantoate_ligase"/>
    <property type="match status" value="1"/>
</dbReference>
<dbReference type="SUPFAM" id="SSF52374">
    <property type="entry name" value="Nucleotidylyl transferase"/>
    <property type="match status" value="1"/>
</dbReference>
<feature type="chain" id="PRO_0000128250" description="Pantothenate synthetase">
    <location>
        <begin position="1"/>
        <end position="318"/>
    </location>
</feature>
<feature type="region of interest" description="Disordered" evidence="2">
    <location>
        <begin position="295"/>
        <end position="318"/>
    </location>
</feature>
<feature type="active site" description="Proton donor" evidence="1">
    <location>
        <position position="51"/>
    </location>
</feature>
<feature type="binding site" evidence="1">
    <location>
        <begin position="44"/>
        <end position="51"/>
    </location>
    <ligand>
        <name>ATP</name>
        <dbReference type="ChEBI" id="CHEBI:30616"/>
    </ligand>
</feature>
<feature type="binding site" evidence="1">
    <location>
        <position position="75"/>
    </location>
    <ligand>
        <name>(R)-pantoate</name>
        <dbReference type="ChEBI" id="CHEBI:15980"/>
    </ligand>
</feature>
<feature type="binding site" evidence="1">
    <location>
        <position position="75"/>
    </location>
    <ligand>
        <name>beta-alanine</name>
        <dbReference type="ChEBI" id="CHEBI:57966"/>
    </ligand>
</feature>
<feature type="binding site" evidence="1">
    <location>
        <begin position="161"/>
        <end position="164"/>
    </location>
    <ligand>
        <name>ATP</name>
        <dbReference type="ChEBI" id="CHEBI:30616"/>
    </ligand>
</feature>
<feature type="binding site" evidence="1">
    <location>
        <position position="167"/>
    </location>
    <ligand>
        <name>(R)-pantoate</name>
        <dbReference type="ChEBI" id="CHEBI:15980"/>
    </ligand>
</feature>
<feature type="binding site" evidence="1">
    <location>
        <position position="190"/>
    </location>
    <ligand>
        <name>ATP</name>
        <dbReference type="ChEBI" id="CHEBI:30616"/>
    </ligand>
</feature>
<feature type="binding site" evidence="1">
    <location>
        <begin position="198"/>
        <end position="201"/>
    </location>
    <ligand>
        <name>ATP</name>
        <dbReference type="ChEBI" id="CHEBI:30616"/>
    </ligand>
</feature>
<comment type="function">
    <text evidence="1">Catalyzes the condensation of pantoate with beta-alanine in an ATP-dependent reaction via a pantoyl-adenylate intermediate.</text>
</comment>
<comment type="catalytic activity">
    <reaction evidence="1">
        <text>(R)-pantoate + beta-alanine + ATP = (R)-pantothenate + AMP + diphosphate + H(+)</text>
        <dbReference type="Rhea" id="RHEA:10912"/>
        <dbReference type="ChEBI" id="CHEBI:15378"/>
        <dbReference type="ChEBI" id="CHEBI:15980"/>
        <dbReference type="ChEBI" id="CHEBI:29032"/>
        <dbReference type="ChEBI" id="CHEBI:30616"/>
        <dbReference type="ChEBI" id="CHEBI:33019"/>
        <dbReference type="ChEBI" id="CHEBI:57966"/>
        <dbReference type="ChEBI" id="CHEBI:456215"/>
        <dbReference type="EC" id="6.3.2.1"/>
    </reaction>
</comment>
<comment type="pathway">
    <text evidence="1">Cofactor biosynthesis; (R)-pantothenate biosynthesis; (R)-pantothenate from (R)-pantoate and beta-alanine: step 1/1.</text>
</comment>
<comment type="subunit">
    <text evidence="1">Homodimer.</text>
</comment>
<comment type="subcellular location">
    <subcellularLocation>
        <location evidence="1">Cytoplasm</location>
    </subcellularLocation>
</comment>
<comment type="miscellaneous">
    <text evidence="1">The reaction proceeds by a bi uni uni bi ping pong mechanism.</text>
</comment>
<comment type="similarity">
    <text evidence="1">Belongs to the pantothenate synthetase family.</text>
</comment>
<name>PANC_NOCFA</name>
<keyword id="KW-0067">ATP-binding</keyword>
<keyword id="KW-0963">Cytoplasm</keyword>
<keyword id="KW-0436">Ligase</keyword>
<keyword id="KW-0547">Nucleotide-binding</keyword>
<keyword id="KW-0566">Pantothenate biosynthesis</keyword>
<keyword id="KW-1185">Reference proteome</keyword>
<accession>Q5Z2U3</accession>
<organism>
    <name type="scientific">Nocardia farcinica (strain IFM 10152)</name>
    <dbReference type="NCBI Taxonomy" id="247156"/>
    <lineage>
        <taxon>Bacteria</taxon>
        <taxon>Bacillati</taxon>
        <taxon>Actinomycetota</taxon>
        <taxon>Actinomycetes</taxon>
        <taxon>Mycobacteriales</taxon>
        <taxon>Nocardiaceae</taxon>
        <taxon>Nocardia</taxon>
    </lineage>
</organism>
<protein>
    <recommendedName>
        <fullName evidence="1">Pantothenate synthetase</fullName>
        <shortName evidence="1">PS</shortName>
        <ecNumber evidence="1">6.3.2.1</ecNumber>
    </recommendedName>
    <alternativeName>
        <fullName evidence="1">Pantoate--beta-alanine ligase</fullName>
    </alternativeName>
    <alternativeName>
        <fullName evidence="1">Pantoate-activating enzyme</fullName>
    </alternativeName>
</protein>
<evidence type="ECO:0000255" key="1">
    <source>
        <dbReference type="HAMAP-Rule" id="MF_00158"/>
    </source>
</evidence>
<evidence type="ECO:0000256" key="2">
    <source>
        <dbReference type="SAM" id="MobiDB-lite"/>
    </source>
</evidence>
<proteinExistence type="inferred from homology"/>
<gene>
    <name evidence="1" type="primary">panC</name>
    <name type="ordered locus">NFA_4060</name>
</gene>
<reference key="1">
    <citation type="journal article" date="2004" name="Proc. Natl. Acad. Sci. U.S.A.">
        <title>The complete genomic sequence of Nocardia farcinica IFM 10152.</title>
        <authorList>
            <person name="Ishikawa J."/>
            <person name="Yamashita A."/>
            <person name="Mikami Y."/>
            <person name="Hoshino Y."/>
            <person name="Kurita H."/>
            <person name="Hotta K."/>
            <person name="Shiba T."/>
            <person name="Hattori M."/>
        </authorList>
    </citation>
    <scope>NUCLEOTIDE SEQUENCE [LARGE SCALE GENOMIC DNA]</scope>
    <source>
        <strain>IFM 10152</strain>
    </source>
</reference>